<proteinExistence type="inferred from homology"/>
<dbReference type="EMBL" id="AE004439">
    <property type="protein sequence ID" value="AAK03033.1"/>
    <property type="molecule type" value="Genomic_DNA"/>
</dbReference>
<dbReference type="RefSeq" id="WP_010906939.1">
    <property type="nucleotide sequence ID" value="NC_002663.1"/>
</dbReference>
<dbReference type="SMR" id="Q9CM87"/>
<dbReference type="STRING" id="272843.PM0949"/>
<dbReference type="EnsemblBacteria" id="AAK03033">
    <property type="protein sequence ID" value="AAK03033"/>
    <property type="gene ID" value="PM0949"/>
</dbReference>
<dbReference type="KEGG" id="pmu:PM0949"/>
<dbReference type="PATRIC" id="fig|272843.6.peg.961"/>
<dbReference type="HOGENOM" id="CLU_001265_61_1_6"/>
<dbReference type="OrthoDB" id="9788453at2"/>
<dbReference type="Proteomes" id="UP000000809">
    <property type="component" value="Chromosome"/>
</dbReference>
<dbReference type="GO" id="GO:0005886">
    <property type="term" value="C:plasma membrane"/>
    <property type="evidence" value="ECO:0007669"/>
    <property type="project" value="UniProtKB-SubCell"/>
</dbReference>
<dbReference type="GO" id="GO:0015144">
    <property type="term" value="F:carbohydrate transmembrane transporter activity"/>
    <property type="evidence" value="ECO:0007669"/>
    <property type="project" value="UniProtKB-UniRule"/>
</dbReference>
<dbReference type="CDD" id="cd17324">
    <property type="entry name" value="MFS_NepI_like"/>
    <property type="match status" value="1"/>
</dbReference>
<dbReference type="Gene3D" id="1.20.1250.20">
    <property type="entry name" value="MFS general substrate transporter like domains"/>
    <property type="match status" value="1"/>
</dbReference>
<dbReference type="HAMAP" id="MF_00517">
    <property type="entry name" value="MFS_SotB"/>
    <property type="match status" value="1"/>
</dbReference>
<dbReference type="InterPro" id="IPR011701">
    <property type="entry name" value="MFS"/>
</dbReference>
<dbReference type="InterPro" id="IPR020846">
    <property type="entry name" value="MFS_dom"/>
</dbReference>
<dbReference type="InterPro" id="IPR050189">
    <property type="entry name" value="MFS_Efflux_Transporters"/>
</dbReference>
<dbReference type="InterPro" id="IPR036259">
    <property type="entry name" value="MFS_trans_sf"/>
</dbReference>
<dbReference type="InterPro" id="IPR023495">
    <property type="entry name" value="Sugar_effux_transptr_put"/>
</dbReference>
<dbReference type="NCBIfam" id="NF002921">
    <property type="entry name" value="PRK03545.1"/>
    <property type="match status" value="1"/>
</dbReference>
<dbReference type="PANTHER" id="PTHR43124">
    <property type="entry name" value="PURINE EFFLUX PUMP PBUE"/>
    <property type="match status" value="1"/>
</dbReference>
<dbReference type="PANTHER" id="PTHR43124:SF4">
    <property type="entry name" value="SUGAR EFFLUX TRANSPORTER"/>
    <property type="match status" value="1"/>
</dbReference>
<dbReference type="Pfam" id="PF07690">
    <property type="entry name" value="MFS_1"/>
    <property type="match status" value="1"/>
</dbReference>
<dbReference type="SUPFAM" id="SSF103473">
    <property type="entry name" value="MFS general substrate transporter"/>
    <property type="match status" value="1"/>
</dbReference>
<dbReference type="PROSITE" id="PS50850">
    <property type="entry name" value="MFS"/>
    <property type="match status" value="1"/>
</dbReference>
<comment type="function">
    <text evidence="1">Involved in the efflux of sugars. The physiological role may be the reduction of the intracellular concentration of toxic sugars or sugar metabolites.</text>
</comment>
<comment type="subcellular location">
    <subcellularLocation>
        <location evidence="1">Cell inner membrane</location>
        <topology evidence="1">Multi-pass membrane protein</topology>
    </subcellularLocation>
</comment>
<comment type="similarity">
    <text evidence="1">Belongs to the major facilitator superfamily. SotB (TC 2.A.1.2) family.</text>
</comment>
<reference key="1">
    <citation type="journal article" date="2001" name="Proc. Natl. Acad. Sci. U.S.A.">
        <title>Complete genomic sequence of Pasteurella multocida Pm70.</title>
        <authorList>
            <person name="May B.J."/>
            <person name="Zhang Q."/>
            <person name="Li L.L."/>
            <person name="Paustian M.L."/>
            <person name="Whittam T.S."/>
            <person name="Kapur V."/>
        </authorList>
    </citation>
    <scope>NUCLEOTIDE SEQUENCE [LARGE SCALE GENOMIC DNA]</scope>
    <source>
        <strain>Pm70</strain>
    </source>
</reference>
<keyword id="KW-0997">Cell inner membrane</keyword>
<keyword id="KW-1003">Cell membrane</keyword>
<keyword id="KW-0472">Membrane</keyword>
<keyword id="KW-1185">Reference proteome</keyword>
<keyword id="KW-0762">Sugar transport</keyword>
<keyword id="KW-0812">Transmembrane</keyword>
<keyword id="KW-1133">Transmembrane helix</keyword>
<keyword id="KW-0813">Transport</keyword>
<name>SOTB_PASMU</name>
<feature type="chain" id="PRO_0000209330" description="Probable sugar efflux transporter">
    <location>
        <begin position="1"/>
        <end position="404"/>
    </location>
</feature>
<feature type="transmembrane region" description="Helical" evidence="1">
    <location>
        <begin position="15"/>
        <end position="35"/>
    </location>
</feature>
<feature type="transmembrane region" description="Helical" evidence="1">
    <location>
        <begin position="51"/>
        <end position="71"/>
    </location>
</feature>
<feature type="transmembrane region" description="Helical" evidence="1">
    <location>
        <begin position="85"/>
        <end position="105"/>
    </location>
</feature>
<feature type="transmembrane region" description="Helical" evidence="1">
    <location>
        <begin position="109"/>
        <end position="129"/>
    </location>
</feature>
<feature type="transmembrane region" description="Helical" evidence="1">
    <location>
        <begin position="137"/>
        <end position="157"/>
    </location>
</feature>
<feature type="transmembrane region" description="Helical" evidence="1">
    <location>
        <begin position="168"/>
        <end position="188"/>
    </location>
</feature>
<feature type="transmembrane region" description="Helical" evidence="1">
    <location>
        <begin position="209"/>
        <end position="229"/>
    </location>
</feature>
<feature type="transmembrane region" description="Helical" evidence="1">
    <location>
        <begin position="245"/>
        <end position="265"/>
    </location>
</feature>
<feature type="transmembrane region" description="Helical" evidence="1">
    <location>
        <begin position="276"/>
        <end position="296"/>
    </location>
</feature>
<feature type="transmembrane region" description="Helical" evidence="1">
    <location>
        <begin position="299"/>
        <end position="319"/>
    </location>
</feature>
<feature type="transmembrane region" description="Helical" evidence="1">
    <location>
        <begin position="333"/>
        <end position="353"/>
    </location>
</feature>
<feature type="transmembrane region" description="Helical" evidence="1">
    <location>
        <begin position="363"/>
        <end position="383"/>
    </location>
</feature>
<sequence>MLPFQAARQRQFARVITFALAGFVFNTTEFIPVALLSDIAQSFAMPVSQTGLIITVYAWVVSLMSLPFMLLTAKAERRGLLIKLLVLFILSHLLSVIAWDFWVLVLARIGVALTHSIFWAITASLVIRVAPKDKKSQAIGLLAIGCSLAMILGLPLGRLIGQFFGWRATFAIIALIAIGILCLFYQLLPHLPSKNAGSLNSLPTLFKRPLLLGLYALTMIIISAHFTAYSYIEPFMLNISTMSHSMATFVLFVFGLSGITASLLFNRYYNAGPIRFILFSMGLLTATLLLLFIASQQTWTMFLLTFFWGIGIAGIGLGLQIRVLHLAPDATDVAMAIYSGIYNIGIGAGALLGNQVMQHYGLAYIGVAGALFAVFGLVLFILVQWKYGHLAPNKLSTEEKKKCG</sequence>
<gene>
    <name evidence="1" type="primary">sotB</name>
    <name type="ordered locus">PM0949</name>
</gene>
<organism>
    <name type="scientific">Pasteurella multocida (strain Pm70)</name>
    <dbReference type="NCBI Taxonomy" id="272843"/>
    <lineage>
        <taxon>Bacteria</taxon>
        <taxon>Pseudomonadati</taxon>
        <taxon>Pseudomonadota</taxon>
        <taxon>Gammaproteobacteria</taxon>
        <taxon>Pasteurellales</taxon>
        <taxon>Pasteurellaceae</taxon>
        <taxon>Pasteurella</taxon>
    </lineage>
</organism>
<evidence type="ECO:0000255" key="1">
    <source>
        <dbReference type="HAMAP-Rule" id="MF_00517"/>
    </source>
</evidence>
<protein>
    <recommendedName>
        <fullName evidence="1">Probable sugar efflux transporter</fullName>
    </recommendedName>
</protein>
<accession>Q9CM87</accession>